<protein>
    <recommendedName>
        <fullName evidence="1">Fructose-1,6-bisphosphatase class 1</fullName>
        <shortName evidence="1">FBPase class 1</shortName>
        <ecNumber evidence="1">3.1.3.11</ecNumber>
    </recommendedName>
    <alternativeName>
        <fullName evidence="1">D-fructose-1,6-bisphosphate 1-phosphohydrolase class 1</fullName>
    </alternativeName>
</protein>
<evidence type="ECO:0000255" key="1">
    <source>
        <dbReference type="HAMAP-Rule" id="MF_01855"/>
    </source>
</evidence>
<proteinExistence type="inferred from homology"/>
<accession>B2VCY1</accession>
<name>F16PA_ERWT9</name>
<keyword id="KW-0119">Carbohydrate metabolism</keyword>
<keyword id="KW-0963">Cytoplasm</keyword>
<keyword id="KW-0378">Hydrolase</keyword>
<keyword id="KW-0460">Magnesium</keyword>
<keyword id="KW-0479">Metal-binding</keyword>
<keyword id="KW-1185">Reference proteome</keyword>
<dbReference type="EC" id="3.1.3.11" evidence="1"/>
<dbReference type="EMBL" id="CU468135">
    <property type="protein sequence ID" value="CAO97983.1"/>
    <property type="molecule type" value="Genomic_DNA"/>
</dbReference>
<dbReference type="RefSeq" id="WP_012442637.1">
    <property type="nucleotide sequence ID" value="NC_010694.1"/>
</dbReference>
<dbReference type="SMR" id="B2VCY1"/>
<dbReference type="STRING" id="465817.ETA_29370"/>
<dbReference type="KEGG" id="eta:ETA_29370"/>
<dbReference type="eggNOG" id="COG0158">
    <property type="taxonomic scope" value="Bacteria"/>
</dbReference>
<dbReference type="HOGENOM" id="CLU_039977_2_2_6"/>
<dbReference type="OrthoDB" id="9806756at2"/>
<dbReference type="UniPathway" id="UPA00138"/>
<dbReference type="Proteomes" id="UP000001726">
    <property type="component" value="Chromosome"/>
</dbReference>
<dbReference type="GO" id="GO:0005829">
    <property type="term" value="C:cytosol"/>
    <property type="evidence" value="ECO:0007669"/>
    <property type="project" value="TreeGrafter"/>
</dbReference>
<dbReference type="GO" id="GO:0042132">
    <property type="term" value="F:fructose 1,6-bisphosphate 1-phosphatase activity"/>
    <property type="evidence" value="ECO:0007669"/>
    <property type="project" value="UniProtKB-UniRule"/>
</dbReference>
<dbReference type="GO" id="GO:0000287">
    <property type="term" value="F:magnesium ion binding"/>
    <property type="evidence" value="ECO:0007669"/>
    <property type="project" value="UniProtKB-UniRule"/>
</dbReference>
<dbReference type="GO" id="GO:0030388">
    <property type="term" value="P:fructose 1,6-bisphosphate metabolic process"/>
    <property type="evidence" value="ECO:0007669"/>
    <property type="project" value="TreeGrafter"/>
</dbReference>
<dbReference type="GO" id="GO:0006002">
    <property type="term" value="P:fructose 6-phosphate metabolic process"/>
    <property type="evidence" value="ECO:0007669"/>
    <property type="project" value="TreeGrafter"/>
</dbReference>
<dbReference type="GO" id="GO:0006000">
    <property type="term" value="P:fructose metabolic process"/>
    <property type="evidence" value="ECO:0007669"/>
    <property type="project" value="TreeGrafter"/>
</dbReference>
<dbReference type="GO" id="GO:0006094">
    <property type="term" value="P:gluconeogenesis"/>
    <property type="evidence" value="ECO:0007669"/>
    <property type="project" value="UniProtKB-UniRule"/>
</dbReference>
<dbReference type="GO" id="GO:0005986">
    <property type="term" value="P:sucrose biosynthetic process"/>
    <property type="evidence" value="ECO:0007669"/>
    <property type="project" value="TreeGrafter"/>
</dbReference>
<dbReference type="CDD" id="cd00354">
    <property type="entry name" value="FBPase"/>
    <property type="match status" value="1"/>
</dbReference>
<dbReference type="FunFam" id="3.30.540.10:FF:000002">
    <property type="entry name" value="Fructose-1,6-bisphosphatase class 1"/>
    <property type="match status" value="1"/>
</dbReference>
<dbReference type="FunFam" id="3.40.190.80:FF:000001">
    <property type="entry name" value="Fructose-1,6-bisphosphatase class 1"/>
    <property type="match status" value="1"/>
</dbReference>
<dbReference type="Gene3D" id="3.40.190.80">
    <property type="match status" value="1"/>
</dbReference>
<dbReference type="Gene3D" id="3.30.540.10">
    <property type="entry name" value="Fructose-1,6-Bisphosphatase, subunit A, domain 1"/>
    <property type="match status" value="1"/>
</dbReference>
<dbReference type="HAMAP" id="MF_01855">
    <property type="entry name" value="FBPase_class1"/>
    <property type="match status" value="1"/>
</dbReference>
<dbReference type="InterPro" id="IPR044015">
    <property type="entry name" value="FBPase_C_dom"/>
</dbReference>
<dbReference type="InterPro" id="IPR000146">
    <property type="entry name" value="FBPase_class-1"/>
</dbReference>
<dbReference type="InterPro" id="IPR033391">
    <property type="entry name" value="FBPase_N"/>
</dbReference>
<dbReference type="InterPro" id="IPR028343">
    <property type="entry name" value="FBPtase"/>
</dbReference>
<dbReference type="InterPro" id="IPR020548">
    <property type="entry name" value="Fructose_bisphosphatase_AS"/>
</dbReference>
<dbReference type="NCBIfam" id="NF006778">
    <property type="entry name" value="PRK09293.1-1"/>
    <property type="match status" value="1"/>
</dbReference>
<dbReference type="PANTHER" id="PTHR11556">
    <property type="entry name" value="FRUCTOSE-1,6-BISPHOSPHATASE-RELATED"/>
    <property type="match status" value="1"/>
</dbReference>
<dbReference type="PANTHER" id="PTHR11556:SF35">
    <property type="entry name" value="SEDOHEPTULOSE-1,7-BISPHOSPHATASE, CHLOROPLASTIC"/>
    <property type="match status" value="1"/>
</dbReference>
<dbReference type="Pfam" id="PF00316">
    <property type="entry name" value="FBPase"/>
    <property type="match status" value="1"/>
</dbReference>
<dbReference type="Pfam" id="PF18913">
    <property type="entry name" value="FBPase_C"/>
    <property type="match status" value="1"/>
</dbReference>
<dbReference type="PIRSF" id="PIRSF500210">
    <property type="entry name" value="FBPtase"/>
    <property type="match status" value="1"/>
</dbReference>
<dbReference type="PIRSF" id="PIRSF000904">
    <property type="entry name" value="FBPtase_SBPase"/>
    <property type="match status" value="1"/>
</dbReference>
<dbReference type="PRINTS" id="PR00115">
    <property type="entry name" value="F16BPHPHTASE"/>
</dbReference>
<dbReference type="SUPFAM" id="SSF56655">
    <property type="entry name" value="Carbohydrate phosphatase"/>
    <property type="match status" value="1"/>
</dbReference>
<dbReference type="PROSITE" id="PS00124">
    <property type="entry name" value="FBPASE"/>
    <property type="match status" value="1"/>
</dbReference>
<reference key="1">
    <citation type="journal article" date="2008" name="Environ. Microbiol.">
        <title>The genome of Erwinia tasmaniensis strain Et1/99, a non-pathogenic bacterium in the genus Erwinia.</title>
        <authorList>
            <person name="Kube M."/>
            <person name="Migdoll A.M."/>
            <person name="Mueller I."/>
            <person name="Kuhl H."/>
            <person name="Beck A."/>
            <person name="Reinhardt R."/>
            <person name="Geider K."/>
        </authorList>
    </citation>
    <scope>NUCLEOTIDE SEQUENCE [LARGE SCALE GENOMIC DNA]</scope>
    <source>
        <strain>DSM 17950 / CFBP 7177 / CIP 109463 / NCPPB 4357 / Et1/99</strain>
    </source>
</reference>
<feature type="chain" id="PRO_0000364544" description="Fructose-1,6-bisphosphatase class 1">
    <location>
        <begin position="1"/>
        <end position="332"/>
    </location>
</feature>
<feature type="binding site" evidence="1">
    <location>
        <position position="89"/>
    </location>
    <ligand>
        <name>Mg(2+)</name>
        <dbReference type="ChEBI" id="CHEBI:18420"/>
        <label>1</label>
    </ligand>
</feature>
<feature type="binding site" evidence="1">
    <location>
        <position position="110"/>
    </location>
    <ligand>
        <name>Mg(2+)</name>
        <dbReference type="ChEBI" id="CHEBI:18420"/>
        <label>1</label>
    </ligand>
</feature>
<feature type="binding site" evidence="1">
    <location>
        <position position="110"/>
    </location>
    <ligand>
        <name>Mg(2+)</name>
        <dbReference type="ChEBI" id="CHEBI:18420"/>
        <label>2</label>
    </ligand>
</feature>
<feature type="binding site" evidence="1">
    <location>
        <position position="112"/>
    </location>
    <ligand>
        <name>Mg(2+)</name>
        <dbReference type="ChEBI" id="CHEBI:18420"/>
        <label>1</label>
    </ligand>
</feature>
<feature type="binding site" evidence="1">
    <location>
        <begin position="113"/>
        <end position="116"/>
    </location>
    <ligand>
        <name>substrate</name>
    </ligand>
</feature>
<feature type="binding site" evidence="1">
    <location>
        <position position="113"/>
    </location>
    <ligand>
        <name>Mg(2+)</name>
        <dbReference type="ChEBI" id="CHEBI:18420"/>
        <label>2</label>
    </ligand>
</feature>
<feature type="binding site" evidence="1">
    <location>
        <position position="206"/>
    </location>
    <ligand>
        <name>substrate</name>
    </ligand>
</feature>
<feature type="binding site" evidence="1">
    <location>
        <position position="239"/>
    </location>
    <ligand>
        <name>substrate</name>
    </ligand>
</feature>
<feature type="binding site" evidence="1">
    <location>
        <begin position="257"/>
        <end position="259"/>
    </location>
    <ligand>
        <name>substrate</name>
    </ligand>
</feature>
<feature type="binding site" evidence="1">
    <location>
        <position position="269"/>
    </location>
    <ligand>
        <name>substrate</name>
    </ligand>
</feature>
<feature type="binding site" evidence="1">
    <location>
        <position position="275"/>
    </location>
    <ligand>
        <name>Mg(2+)</name>
        <dbReference type="ChEBI" id="CHEBI:18420"/>
        <label>2</label>
    </ligand>
</feature>
<comment type="catalytic activity">
    <reaction evidence="1">
        <text>beta-D-fructose 1,6-bisphosphate + H2O = beta-D-fructose 6-phosphate + phosphate</text>
        <dbReference type="Rhea" id="RHEA:11064"/>
        <dbReference type="ChEBI" id="CHEBI:15377"/>
        <dbReference type="ChEBI" id="CHEBI:32966"/>
        <dbReference type="ChEBI" id="CHEBI:43474"/>
        <dbReference type="ChEBI" id="CHEBI:57634"/>
        <dbReference type="EC" id="3.1.3.11"/>
    </reaction>
</comment>
<comment type="cofactor">
    <cofactor evidence="1">
        <name>Mg(2+)</name>
        <dbReference type="ChEBI" id="CHEBI:18420"/>
    </cofactor>
    <text evidence="1">Binds 2 magnesium ions per subunit.</text>
</comment>
<comment type="pathway">
    <text evidence="1">Carbohydrate biosynthesis; gluconeogenesis.</text>
</comment>
<comment type="subunit">
    <text evidence="1">Homotetramer.</text>
</comment>
<comment type="subcellular location">
    <subcellularLocation>
        <location evidence="1">Cytoplasm</location>
    </subcellularLocation>
</comment>
<comment type="similarity">
    <text evidence="1">Belongs to the FBPase class 1 family.</text>
</comment>
<organism>
    <name type="scientific">Erwinia tasmaniensis (strain DSM 17950 / CFBP 7177 / CIP 109463 / NCPPB 4357 / Et1/99)</name>
    <dbReference type="NCBI Taxonomy" id="465817"/>
    <lineage>
        <taxon>Bacteria</taxon>
        <taxon>Pseudomonadati</taxon>
        <taxon>Pseudomonadota</taxon>
        <taxon>Gammaproteobacteria</taxon>
        <taxon>Enterobacterales</taxon>
        <taxon>Erwiniaceae</taxon>
        <taxon>Erwinia</taxon>
    </lineage>
</organism>
<gene>
    <name evidence="1" type="primary">fbp</name>
    <name type="ordered locus">ETA_29370</name>
</gene>
<sequence length="332" mass="36786">MKTLGEFIVEKQHDFPHATGELTALISAIKLGAKIIHRDINKAGLVDILGASGVENIQGEQQMKLDLYANEKLKAALKARGIVAGIASEEEDEIVIFEGVENGKYVVLMDPLDGSSNIDVNVSVGTIFSIYRRITPAGTPVTEEDFLQPGSQQVAAGYVVYGSSTMLVYTTGYGVHAFTYDPSLGVFCLSAERMTFPENGYTYSINEGNYIRFPQGVKKYLKFCQEEDKATRRPYTSRYIGSLVADFHRNLLKGGIYLYPSTASHPQGKLRLLYECNPMAFLAEQAGGKASDGKNRILDLVPETLHQRSPFFVGNDHMVNDTERFLREYPDN</sequence>